<accession>Q04461</accession>
<accession>D6VZT4</accession>
<dbReference type="EMBL" id="Z49702">
    <property type="protein sequence ID" value="CAA89747.1"/>
    <property type="molecule type" value="Genomic_DNA"/>
</dbReference>
<dbReference type="EMBL" id="BK006946">
    <property type="protein sequence ID" value="DAA10008.1"/>
    <property type="molecule type" value="Genomic_DNA"/>
</dbReference>
<dbReference type="PIR" id="S54572">
    <property type="entry name" value="S54572"/>
</dbReference>
<dbReference type="RefSeq" id="NP_013829.1">
    <property type="nucleotide sequence ID" value="NM_001182611.1"/>
</dbReference>
<dbReference type="SMR" id="Q04461"/>
<dbReference type="BioGRID" id="35287">
    <property type="interactions" value="122"/>
</dbReference>
<dbReference type="DIP" id="DIP-2716N"/>
<dbReference type="FunCoup" id="Q04461">
    <property type="interactions" value="48"/>
</dbReference>
<dbReference type="IntAct" id="Q04461">
    <property type="interactions" value="11"/>
</dbReference>
<dbReference type="MINT" id="Q04461"/>
<dbReference type="STRING" id="4932.YMR111C"/>
<dbReference type="GlyGen" id="Q04461">
    <property type="glycosylation" value="2 sites, 1 O-linked glycan (2 sites)"/>
</dbReference>
<dbReference type="iPTMnet" id="Q04461"/>
<dbReference type="PaxDb" id="4932-YMR111C"/>
<dbReference type="PeptideAtlas" id="Q04461"/>
<dbReference type="EnsemblFungi" id="YMR111C_mRNA">
    <property type="protein sequence ID" value="YMR111C"/>
    <property type="gene ID" value="YMR111C"/>
</dbReference>
<dbReference type="GeneID" id="855138"/>
<dbReference type="KEGG" id="sce:YMR111C"/>
<dbReference type="AGR" id="SGD:S000004717"/>
<dbReference type="SGD" id="S000004717">
    <property type="gene designation" value="EUC1"/>
</dbReference>
<dbReference type="VEuPathDB" id="FungiDB:YMR111C"/>
<dbReference type="eggNOG" id="ENOG502R143">
    <property type="taxonomic scope" value="Eukaryota"/>
</dbReference>
<dbReference type="HOGENOM" id="CLU_044103_0_0_1"/>
<dbReference type="InParanoid" id="Q04461"/>
<dbReference type="OMA" id="RRYGSTW"/>
<dbReference type="OrthoDB" id="428577at2759"/>
<dbReference type="BioCyc" id="YEAST:G3O-32807-MONOMER"/>
<dbReference type="BioGRID-ORCS" id="855138">
    <property type="hits" value="0 hits in 10 CRISPR screens"/>
</dbReference>
<dbReference type="PRO" id="PR:Q04461"/>
<dbReference type="Proteomes" id="UP000002311">
    <property type="component" value="Chromosome XIII"/>
</dbReference>
<dbReference type="RNAct" id="Q04461">
    <property type="molecule type" value="protein"/>
</dbReference>
<dbReference type="GO" id="GO:0000785">
    <property type="term" value="C:chromatin"/>
    <property type="evidence" value="ECO:0000314"/>
    <property type="project" value="SGD"/>
</dbReference>
<dbReference type="GO" id="GO:0005737">
    <property type="term" value="C:cytoplasm"/>
    <property type="evidence" value="ECO:0007005"/>
    <property type="project" value="SGD"/>
</dbReference>
<dbReference type="GO" id="GO:0005634">
    <property type="term" value="C:nucleus"/>
    <property type="evidence" value="ECO:0007005"/>
    <property type="project" value="SGD"/>
</dbReference>
<dbReference type="GO" id="GO:0000981">
    <property type="term" value="F:DNA-binding transcription factor activity, RNA polymerase II-specific"/>
    <property type="evidence" value="ECO:0000318"/>
    <property type="project" value="GO_Central"/>
</dbReference>
<dbReference type="GO" id="GO:0000978">
    <property type="term" value="F:RNA polymerase II cis-regulatory region sequence-specific DNA binding"/>
    <property type="evidence" value="ECO:0000318"/>
    <property type="project" value="GO_Central"/>
</dbReference>
<dbReference type="GO" id="GO:0043565">
    <property type="term" value="F:sequence-specific DNA binding"/>
    <property type="evidence" value="ECO:0000314"/>
    <property type="project" value="SGD"/>
</dbReference>
<dbReference type="GO" id="GO:0060963">
    <property type="term" value="P:positive regulation of ribosomal protein gene transcription by RNA polymerase II"/>
    <property type="evidence" value="ECO:0000318"/>
    <property type="project" value="GO_Central"/>
</dbReference>
<dbReference type="GO" id="GO:0031503">
    <property type="term" value="P:protein-containing complex localization"/>
    <property type="evidence" value="ECO:0000315"/>
    <property type="project" value="SGD"/>
</dbReference>
<dbReference type="InterPro" id="IPR052146">
    <property type="entry name" value="HOT1"/>
</dbReference>
<dbReference type="InterPro" id="IPR022210">
    <property type="entry name" value="TF_GCR1-like"/>
</dbReference>
<dbReference type="PANTHER" id="PTHR37784">
    <property type="entry name" value="PROTEIN MSN1"/>
    <property type="match status" value="1"/>
</dbReference>
<dbReference type="PANTHER" id="PTHR37784:SF4">
    <property type="entry name" value="TRANSCRIPTION FACTOR-LIKE PROTEIN EUC1"/>
    <property type="match status" value="1"/>
</dbReference>
<dbReference type="Pfam" id="PF12550">
    <property type="entry name" value="GCR1_C"/>
    <property type="match status" value="1"/>
</dbReference>
<sequence>MPAREYNYVEGFGGYGSLDDDDSDRDSERRNHDLGQRTITTSPTGVSRHAALNRYMIPGRINPLFRPTDAAQPPIVSTSTSASATEPTNRIGPGRIKETPETNFNAFLIAQLTRMEEQNANLKEEISLMKKEQELFFLENQKKLEKGFKDINKYVEDVSAMKEVFKEVVGIMTGERIRFIDHTGENVTPQEAARVGNPSTSTQAHQSQSRSTNWQEYSMHASILAGDPRIKPEPGLSDFENGEYDGNESDENATTRNLPLNNPDSVSNADDSNNQLDGTGNENDIRNRRGCVGTSYKLNRAIQNVTDAAREYFEGLPGQPSVLSLERRYGSTWRRSAKERTLFTKRMTIIKRIIDIKDDPSKYGLSLPENKISRNQAIKVVENIRLGNNTFKGHHCRLSMSQLYEYFSKKMDKLEDYSLTLKRRGKPRRIFLLEEREARLSLQQPHSIPNSSTGTPEHDQDT</sequence>
<comment type="function">
    <text evidence="4">Transcription factor-like protein that binds to specific DNA motifs called ub-HS-motif associated with several locations where proteins other than histone H2B are ubiquitinated (ub-hotspots) (PubMed:31015336). Ubiquitination at these sites depends on the SUMO-targeted ubiquitin ligase (STUbL) complex SLX5/SLX8 and protein turnover on the CDC48 segregase (PubMed:31015336). UBC9, SIZ1, or SIZ2 sumoylate DNA-bound EUC1 to stabilize its DNA-binding (PubMed:31015336). Sumoylated EUC1 acts a cofactor required for the recruitment of the SLX5/SLX8 STUbL complex via specific contacts between EUC1 and SLX5, as well as an additional SUMO-mediated interaction (PubMed:31015336). SLX5/SLX8 then ubiquitinates EUC1 and presumably other targets at ub-hotspots, and the CDC48/UFD1/NPL4 complex, together with UBX4 and UBX5, removes Lys-48-linked ubiquitinated proteins from chromatin. Ubiquitinated proteins could be either degraded by the proteasome or recycled by deubiquitination (PubMed:31015336). EUC1 itself does not seem to underlie extensive turnover, as it is a very stable protein (PubMed:31015336). EUC1 is able to act as a transcription factor, but its function at ub-hotspots does not seem to depend on this ability (PubMed:31015336). EUC1-mediated ub-hotspots are crucial during stress responses when gene expression control is impaired (PubMed:31015336).</text>
</comment>
<comment type="subunit">
    <text evidence="4">Homodimer (PubMed:31015336). Interacts with SLX5 (PubMed:31015336).</text>
</comment>
<comment type="subcellular location">
    <subcellularLocation>
        <location evidence="4">Chromosome</location>
    </subcellularLocation>
    <text evidence="4">Localizes to few distinct genomic hotspots where proteins other than histone H2B are ubiquitinated (ub-hotspots).</text>
</comment>
<comment type="domain">
    <text evidence="4">The coiled-coil motif is required for homodimerization.</text>
</comment>
<comment type="PTM">
    <text evidence="4">Sumoylated at Lys-231 and subsequently ubiquitinated by the SUMO-targeted ubiquitin ligase (STUbL) complex SLX5/SLX8.</text>
</comment>
<comment type="disruption phenotype">
    <text evidence="4">Prevents ub-hotspot formation and exacerbates heat sensitivity of cells deficient in Rpd3L histone deacetylase complex members (PubMed:31015336). Leads to the up-regulation of the expression of the Rpd3S complex subunit RCO1 of the Rpd3S complex and down-regulation of HSP12 and SIR2 (PubMed:31015336).</text>
</comment>
<comment type="miscellaneous">
    <text evidence="3">Present with 238 molecules/cell in log phase SD medium.</text>
</comment>
<proteinExistence type="evidence at protein level"/>
<keyword id="KW-0158">Chromosome</keyword>
<keyword id="KW-0175">Coiled coil</keyword>
<keyword id="KW-0238">DNA-binding</keyword>
<keyword id="KW-1017">Isopeptide bond</keyword>
<keyword id="KW-0597">Phosphoprotein</keyword>
<keyword id="KW-1185">Reference proteome</keyword>
<keyword id="KW-0832">Ubl conjugation</keyword>
<gene>
    <name evidence="5" type="primary">EUC1</name>
    <name type="ordered locus">YMR111C</name>
    <name type="ORF">YM9718.10C</name>
</gene>
<organism>
    <name type="scientific">Saccharomyces cerevisiae (strain ATCC 204508 / S288c)</name>
    <name type="common">Baker's yeast</name>
    <dbReference type="NCBI Taxonomy" id="559292"/>
    <lineage>
        <taxon>Eukaryota</taxon>
        <taxon>Fungi</taxon>
        <taxon>Dikarya</taxon>
        <taxon>Ascomycota</taxon>
        <taxon>Saccharomycotina</taxon>
        <taxon>Saccharomycetes</taxon>
        <taxon>Saccharomycetales</taxon>
        <taxon>Saccharomycetaceae</taxon>
        <taxon>Saccharomyces</taxon>
    </lineage>
</organism>
<evidence type="ECO:0000255" key="1"/>
<evidence type="ECO:0000256" key="2">
    <source>
        <dbReference type="SAM" id="MobiDB-lite"/>
    </source>
</evidence>
<evidence type="ECO:0000269" key="3">
    <source>
    </source>
</evidence>
<evidence type="ECO:0000269" key="4">
    <source>
    </source>
</evidence>
<evidence type="ECO:0000303" key="5">
    <source>
    </source>
</evidence>
<evidence type="ECO:0007744" key="6">
    <source>
    </source>
</evidence>
<evidence type="ECO:0007744" key="7">
    <source>
    </source>
</evidence>
<protein>
    <recommendedName>
        <fullName evidence="5">Transcription factor-like protein EUC1</fullName>
    </recommendedName>
    <alternativeName>
        <fullName evidence="5">Enriches ubiquitin on chromatin protein 1</fullName>
    </alternativeName>
</protein>
<name>EUC1_YEAST</name>
<reference key="1">
    <citation type="journal article" date="1997" name="Nature">
        <title>The nucleotide sequence of Saccharomyces cerevisiae chromosome XIII.</title>
        <authorList>
            <person name="Bowman S."/>
            <person name="Churcher C.M."/>
            <person name="Badcock K."/>
            <person name="Brown D."/>
            <person name="Chillingworth T."/>
            <person name="Connor R."/>
            <person name="Dedman K."/>
            <person name="Devlin K."/>
            <person name="Gentles S."/>
            <person name="Hamlin N."/>
            <person name="Hunt S."/>
            <person name="Jagels K."/>
            <person name="Lye G."/>
            <person name="Moule S."/>
            <person name="Odell C."/>
            <person name="Pearson D."/>
            <person name="Rajandream M.A."/>
            <person name="Rice P."/>
            <person name="Skelton J."/>
            <person name="Walsh S.V."/>
            <person name="Whitehead S."/>
            <person name="Barrell B.G."/>
        </authorList>
    </citation>
    <scope>NUCLEOTIDE SEQUENCE [LARGE SCALE GENOMIC DNA]</scope>
    <source>
        <strain>ATCC 204508 / S288c</strain>
    </source>
</reference>
<reference key="2">
    <citation type="journal article" date="2014" name="G3 (Bethesda)">
        <title>The reference genome sequence of Saccharomyces cerevisiae: Then and now.</title>
        <authorList>
            <person name="Engel S.R."/>
            <person name="Dietrich F.S."/>
            <person name="Fisk D.G."/>
            <person name="Binkley G."/>
            <person name="Balakrishnan R."/>
            <person name="Costanzo M.C."/>
            <person name="Dwight S.S."/>
            <person name="Hitz B.C."/>
            <person name="Karra K."/>
            <person name="Nash R.S."/>
            <person name="Weng S."/>
            <person name="Wong E.D."/>
            <person name="Lloyd P."/>
            <person name="Skrzypek M.S."/>
            <person name="Miyasato S.R."/>
            <person name="Simison M."/>
            <person name="Cherry J.M."/>
        </authorList>
    </citation>
    <scope>GENOME REANNOTATION</scope>
    <source>
        <strain>ATCC 204508 / S288c</strain>
    </source>
</reference>
<reference key="3">
    <citation type="journal article" date="2003" name="Nature">
        <title>Global analysis of protein expression in yeast.</title>
        <authorList>
            <person name="Ghaemmaghami S."/>
            <person name="Huh W.-K."/>
            <person name="Bower K."/>
            <person name="Howson R.W."/>
            <person name="Belle A."/>
            <person name="Dephoure N."/>
            <person name="O'Shea E.K."/>
            <person name="Weissman J.S."/>
        </authorList>
    </citation>
    <scope>LEVEL OF PROTEIN EXPRESSION [LARGE SCALE ANALYSIS]</scope>
</reference>
<reference key="4">
    <citation type="journal article" date="2008" name="Mol. Cell. Proteomics">
        <title>A multidimensional chromatography technology for in-depth phosphoproteome analysis.</title>
        <authorList>
            <person name="Albuquerque C.P."/>
            <person name="Smolka M.B."/>
            <person name="Payne S.H."/>
            <person name="Bafna V."/>
            <person name="Eng J."/>
            <person name="Zhou H."/>
        </authorList>
    </citation>
    <scope>PHOSPHORYLATION [LARGE SCALE ANALYSIS] AT SER-249</scope>
    <scope>IDENTIFICATION BY MASS SPECTROMETRY [LARGE SCALE ANALYSIS]</scope>
</reference>
<reference key="5">
    <citation type="journal article" date="2009" name="Science">
        <title>Global analysis of Cdk1 substrate phosphorylation sites provides insights into evolution.</title>
        <authorList>
            <person name="Holt L.J."/>
            <person name="Tuch B.B."/>
            <person name="Villen J."/>
            <person name="Johnson A.D."/>
            <person name="Gygi S.P."/>
            <person name="Morgan D.O."/>
        </authorList>
    </citation>
    <scope>PHOSPHORYLATION [LARGE SCALE ANALYSIS] AT SER-17; SER-23; SER-237; SER-249 AND THR-254</scope>
    <scope>IDENTIFICATION BY MASS SPECTROMETRY [LARGE SCALE ANALYSIS]</scope>
</reference>
<reference key="6">
    <citation type="journal article" date="2019" name="EMBO J.">
        <title>Slx5/Slx8-dependent ubiquitin hotspots on chromatin contribute to stress tolerance.</title>
        <authorList>
            <person name="Hoepfler M."/>
            <person name="Kern M.J."/>
            <person name="Straub T."/>
            <person name="Prytuliak R."/>
            <person name="Habermann B.H."/>
            <person name="Pfander B."/>
            <person name="Jentsch S."/>
        </authorList>
    </citation>
    <scope>FUNCTION</scope>
    <scope>SUBCELLULAR LOCATION</scope>
    <scope>DNA-BINDING</scope>
    <scope>SUBUNIT</scope>
    <scope>INTERACTION WITH SLX5</scope>
    <scope>DISRUPTION PHENOTYPE</scope>
    <scope>SUMOYLATION AT LYS-231</scope>
    <scope>MUTAGENESIS OF LYS-231; TRP-333 AND ARG-334</scope>
    <scope>DOMAIN</scope>
</reference>
<feature type="chain" id="PRO_0000203291" description="Transcription factor-like protein EUC1">
    <location>
        <begin position="1"/>
        <end position="462"/>
    </location>
</feature>
<feature type="region of interest" description="Disordered" evidence="2">
    <location>
        <begin position="11"/>
        <end position="43"/>
    </location>
</feature>
<feature type="region of interest" description="Disordered" evidence="2">
    <location>
        <begin position="66"/>
        <end position="97"/>
    </location>
</feature>
<feature type="region of interest" description="Homodimerization region" evidence="4">
    <location>
        <begin position="81"/>
        <end position="140"/>
    </location>
</feature>
<feature type="region of interest" description="Disordered" evidence="2">
    <location>
        <begin position="190"/>
        <end position="214"/>
    </location>
</feature>
<feature type="region of interest" description="Disordered" evidence="2">
    <location>
        <begin position="226"/>
        <end position="289"/>
    </location>
</feature>
<feature type="region of interest" description="GCR1 DNA-binding region" evidence="4">
    <location>
        <begin position="296"/>
        <end position="385"/>
    </location>
</feature>
<feature type="region of interest" description="Disordered" evidence="2">
    <location>
        <begin position="441"/>
        <end position="462"/>
    </location>
</feature>
<feature type="coiled-coil region" evidence="1">
    <location>
        <begin position="105"/>
        <end position="135"/>
    </location>
</feature>
<feature type="compositionally biased region" description="Basic and acidic residues" evidence="2">
    <location>
        <begin position="26"/>
        <end position="35"/>
    </location>
</feature>
<feature type="compositionally biased region" description="Polar residues" evidence="2">
    <location>
        <begin position="197"/>
        <end position="214"/>
    </location>
</feature>
<feature type="compositionally biased region" description="Acidic residues" evidence="2">
    <location>
        <begin position="240"/>
        <end position="251"/>
    </location>
</feature>
<feature type="compositionally biased region" description="Polar residues" evidence="2">
    <location>
        <begin position="252"/>
        <end position="282"/>
    </location>
</feature>
<feature type="compositionally biased region" description="Polar residues" evidence="2">
    <location>
        <begin position="441"/>
        <end position="455"/>
    </location>
</feature>
<feature type="modified residue" description="Phosphoserine" evidence="7">
    <location>
        <position position="17"/>
    </location>
</feature>
<feature type="modified residue" description="Phosphoserine" evidence="7">
    <location>
        <position position="23"/>
    </location>
</feature>
<feature type="modified residue" description="Phosphoserine" evidence="7">
    <location>
        <position position="237"/>
    </location>
</feature>
<feature type="modified residue" description="Phosphoserine" evidence="6 7">
    <location>
        <position position="249"/>
    </location>
</feature>
<feature type="modified residue" description="Phosphothreonine" evidence="7">
    <location>
        <position position="254"/>
    </location>
</feature>
<feature type="cross-link" description="Glycyl lysine isopeptide (Lys-Gly) (interchain with G-Cter in SUMO)" evidence="4">
    <location>
        <position position="231"/>
    </location>
</feature>
<feature type="mutagenesis site" description="Strongly reduces EUC1 sumoylation and the formation of ub-hotspots." evidence="4">
    <original>K</original>
    <variation>R</variation>
    <location>
        <position position="231"/>
    </location>
</feature>
<feature type="mutagenesis site" description="Leads to complete loss of association with ub-hotspots; when associated with A-34." evidence="4">
    <original>W</original>
    <variation>A</variation>
    <location>
        <position position="333"/>
    </location>
</feature>
<feature type="mutagenesis site" description="Leads to complete loss of association with ub-hotspots; when associated with A-33." evidence="4">
    <original>R</original>
    <variation>A</variation>
    <location>
        <position position="334"/>
    </location>
</feature>